<feature type="chain" id="PRO_0000158848" description="Adenylate kinase">
    <location>
        <begin position="1"/>
        <end position="215"/>
    </location>
</feature>
<feature type="region of interest" description="NMP" evidence="1">
    <location>
        <begin position="30"/>
        <end position="59"/>
    </location>
</feature>
<feature type="region of interest" description="LID" evidence="1">
    <location>
        <begin position="126"/>
        <end position="163"/>
    </location>
</feature>
<feature type="binding site" evidence="1">
    <location>
        <begin position="10"/>
        <end position="15"/>
    </location>
    <ligand>
        <name>ATP</name>
        <dbReference type="ChEBI" id="CHEBI:30616"/>
    </ligand>
</feature>
<feature type="binding site" evidence="1">
    <location>
        <position position="31"/>
    </location>
    <ligand>
        <name>AMP</name>
        <dbReference type="ChEBI" id="CHEBI:456215"/>
    </ligand>
</feature>
<feature type="binding site" evidence="1">
    <location>
        <position position="36"/>
    </location>
    <ligand>
        <name>AMP</name>
        <dbReference type="ChEBI" id="CHEBI:456215"/>
    </ligand>
</feature>
<feature type="binding site" evidence="1">
    <location>
        <begin position="57"/>
        <end position="59"/>
    </location>
    <ligand>
        <name>AMP</name>
        <dbReference type="ChEBI" id="CHEBI:456215"/>
    </ligand>
</feature>
<feature type="binding site" evidence="1">
    <location>
        <begin position="85"/>
        <end position="88"/>
    </location>
    <ligand>
        <name>AMP</name>
        <dbReference type="ChEBI" id="CHEBI:456215"/>
    </ligand>
</feature>
<feature type="binding site" evidence="1">
    <location>
        <position position="92"/>
    </location>
    <ligand>
        <name>AMP</name>
        <dbReference type="ChEBI" id="CHEBI:456215"/>
    </ligand>
</feature>
<feature type="binding site" evidence="1">
    <location>
        <position position="127"/>
    </location>
    <ligand>
        <name>ATP</name>
        <dbReference type="ChEBI" id="CHEBI:30616"/>
    </ligand>
</feature>
<feature type="binding site" evidence="1">
    <location>
        <position position="130"/>
    </location>
    <ligand>
        <name>Zn(2+)</name>
        <dbReference type="ChEBI" id="CHEBI:29105"/>
        <note>structural</note>
    </ligand>
</feature>
<feature type="binding site" evidence="1">
    <location>
        <position position="133"/>
    </location>
    <ligand>
        <name>Zn(2+)</name>
        <dbReference type="ChEBI" id="CHEBI:29105"/>
        <note>structural</note>
    </ligand>
</feature>
<feature type="binding site" evidence="1">
    <location>
        <begin position="136"/>
        <end position="137"/>
    </location>
    <ligand>
        <name>ATP</name>
        <dbReference type="ChEBI" id="CHEBI:30616"/>
    </ligand>
</feature>
<feature type="binding site" evidence="1">
    <location>
        <position position="150"/>
    </location>
    <ligand>
        <name>Zn(2+)</name>
        <dbReference type="ChEBI" id="CHEBI:29105"/>
        <note>structural</note>
    </ligand>
</feature>
<feature type="binding site" evidence="1">
    <location>
        <position position="153"/>
    </location>
    <ligand>
        <name>Zn(2+)</name>
        <dbReference type="ChEBI" id="CHEBI:29105"/>
        <note>structural</note>
    </ligand>
</feature>
<feature type="binding site" evidence="1">
    <location>
        <position position="160"/>
    </location>
    <ligand>
        <name>AMP</name>
        <dbReference type="ChEBI" id="CHEBI:456215"/>
    </ligand>
</feature>
<feature type="binding site" evidence="1">
    <location>
        <position position="171"/>
    </location>
    <ligand>
        <name>AMP</name>
        <dbReference type="ChEBI" id="CHEBI:456215"/>
    </ligand>
</feature>
<feature type="binding site" evidence="1">
    <location>
        <position position="199"/>
    </location>
    <ligand>
        <name>ATP</name>
        <dbReference type="ChEBI" id="CHEBI:30616"/>
    </ligand>
</feature>
<accession>Q6G792</accession>
<organism>
    <name type="scientific">Staphylococcus aureus (strain MSSA476)</name>
    <dbReference type="NCBI Taxonomy" id="282459"/>
    <lineage>
        <taxon>Bacteria</taxon>
        <taxon>Bacillati</taxon>
        <taxon>Bacillota</taxon>
        <taxon>Bacilli</taxon>
        <taxon>Bacillales</taxon>
        <taxon>Staphylococcaceae</taxon>
        <taxon>Staphylococcus</taxon>
    </lineage>
</organism>
<protein>
    <recommendedName>
        <fullName evidence="1">Adenylate kinase</fullName>
        <shortName evidence="1">AK</shortName>
        <ecNumber evidence="1">2.7.4.3</ecNumber>
    </recommendedName>
    <alternativeName>
        <fullName evidence="1">ATP-AMP transphosphorylase</fullName>
    </alternativeName>
    <alternativeName>
        <fullName evidence="1">ATP:AMP phosphotransferase</fullName>
    </alternativeName>
    <alternativeName>
        <fullName evidence="1">Adenylate monophosphate kinase</fullName>
    </alternativeName>
</protein>
<comment type="function">
    <text evidence="1">Catalyzes the reversible transfer of the terminal phosphate group between ATP and AMP. Plays an important role in cellular energy homeostasis and in adenine nucleotide metabolism.</text>
</comment>
<comment type="catalytic activity">
    <reaction evidence="1">
        <text>AMP + ATP = 2 ADP</text>
        <dbReference type="Rhea" id="RHEA:12973"/>
        <dbReference type="ChEBI" id="CHEBI:30616"/>
        <dbReference type="ChEBI" id="CHEBI:456215"/>
        <dbReference type="ChEBI" id="CHEBI:456216"/>
        <dbReference type="EC" id="2.7.4.3"/>
    </reaction>
</comment>
<comment type="pathway">
    <text evidence="1">Purine metabolism; AMP biosynthesis via salvage pathway; AMP from ADP: step 1/1.</text>
</comment>
<comment type="subunit">
    <text evidence="1">Monomer.</text>
</comment>
<comment type="subcellular location">
    <subcellularLocation>
        <location evidence="1">Cytoplasm</location>
    </subcellularLocation>
</comment>
<comment type="domain">
    <text evidence="1">Consists of three domains, a large central CORE domain and two small peripheral domains, NMPbind and LID, which undergo movements during catalysis. The LID domain closes over the site of phosphoryl transfer upon ATP binding. Assembling and dissambling the active center during each catalytic cycle provides an effective means to prevent ATP hydrolysis. Some bacteria have evolved a zinc-coordinating structure that stabilizes the LID domain.</text>
</comment>
<comment type="similarity">
    <text evidence="1">Belongs to the adenylate kinase family.</text>
</comment>
<reference key="1">
    <citation type="journal article" date="2004" name="Proc. Natl. Acad. Sci. U.S.A.">
        <title>Complete genomes of two clinical Staphylococcus aureus strains: evidence for the rapid evolution of virulence and drug resistance.</title>
        <authorList>
            <person name="Holden M.T.G."/>
            <person name="Feil E.J."/>
            <person name="Lindsay J.A."/>
            <person name="Peacock S.J."/>
            <person name="Day N.P.J."/>
            <person name="Enright M.C."/>
            <person name="Foster T.J."/>
            <person name="Moore C.E."/>
            <person name="Hurst L."/>
            <person name="Atkin R."/>
            <person name="Barron A."/>
            <person name="Bason N."/>
            <person name="Bentley S.D."/>
            <person name="Chillingworth C."/>
            <person name="Chillingworth T."/>
            <person name="Churcher C."/>
            <person name="Clark L."/>
            <person name="Corton C."/>
            <person name="Cronin A."/>
            <person name="Doggett J."/>
            <person name="Dowd L."/>
            <person name="Feltwell T."/>
            <person name="Hance Z."/>
            <person name="Harris B."/>
            <person name="Hauser H."/>
            <person name="Holroyd S."/>
            <person name="Jagels K."/>
            <person name="James K.D."/>
            <person name="Lennard N."/>
            <person name="Line A."/>
            <person name="Mayes R."/>
            <person name="Moule S."/>
            <person name="Mungall K."/>
            <person name="Ormond D."/>
            <person name="Quail M.A."/>
            <person name="Rabbinowitsch E."/>
            <person name="Rutherford K.M."/>
            <person name="Sanders M."/>
            <person name="Sharp S."/>
            <person name="Simmonds M."/>
            <person name="Stevens K."/>
            <person name="Whitehead S."/>
            <person name="Barrell B.G."/>
            <person name="Spratt B.G."/>
            <person name="Parkhill J."/>
        </authorList>
    </citation>
    <scope>NUCLEOTIDE SEQUENCE [LARGE SCALE GENOMIC DNA]</scope>
    <source>
        <strain>MSSA476</strain>
    </source>
</reference>
<proteinExistence type="inferred from homology"/>
<sequence length="215" mass="23974">MNIILMGLPGAGKGTQASEIVKKFPIPHISTGDMFRKAIKEETELGKEAKSYMDRGELVPDEVTVGIVKERISEDDAKKGFLLDGFPRTIEQAEALNNIMSELDRNIDAVINIEVPEEELMNRLTGRRICESCGTTYHLVFNPPKVEGICDIDGGKLYQREDDNPETVANRLSVNIKQSKPILDFYDQKGVLKNIDGSKDISDVTKDVIDILDHL</sequence>
<evidence type="ECO:0000255" key="1">
    <source>
        <dbReference type="HAMAP-Rule" id="MF_00235"/>
    </source>
</evidence>
<keyword id="KW-0067">ATP-binding</keyword>
<keyword id="KW-0963">Cytoplasm</keyword>
<keyword id="KW-0418">Kinase</keyword>
<keyword id="KW-0479">Metal-binding</keyword>
<keyword id="KW-0545">Nucleotide biosynthesis</keyword>
<keyword id="KW-0547">Nucleotide-binding</keyword>
<keyword id="KW-0808">Transferase</keyword>
<keyword id="KW-0862">Zinc</keyword>
<dbReference type="EC" id="2.7.4.3" evidence="1"/>
<dbReference type="EMBL" id="BX571857">
    <property type="protein sequence ID" value="CAG43931.1"/>
    <property type="molecule type" value="Genomic_DNA"/>
</dbReference>
<dbReference type="RefSeq" id="WP_001021468.1">
    <property type="nucleotide sequence ID" value="NC_002953.3"/>
</dbReference>
<dbReference type="SMR" id="Q6G792"/>
<dbReference type="KEGG" id="sas:SAS2120"/>
<dbReference type="HOGENOM" id="CLU_032354_1_2_9"/>
<dbReference type="UniPathway" id="UPA00588">
    <property type="reaction ID" value="UER00649"/>
</dbReference>
<dbReference type="GO" id="GO:0005737">
    <property type="term" value="C:cytoplasm"/>
    <property type="evidence" value="ECO:0007669"/>
    <property type="project" value="UniProtKB-SubCell"/>
</dbReference>
<dbReference type="GO" id="GO:0004017">
    <property type="term" value="F:adenylate kinase activity"/>
    <property type="evidence" value="ECO:0007669"/>
    <property type="project" value="UniProtKB-UniRule"/>
</dbReference>
<dbReference type="GO" id="GO:0005524">
    <property type="term" value="F:ATP binding"/>
    <property type="evidence" value="ECO:0007669"/>
    <property type="project" value="UniProtKB-UniRule"/>
</dbReference>
<dbReference type="GO" id="GO:0008270">
    <property type="term" value="F:zinc ion binding"/>
    <property type="evidence" value="ECO:0007669"/>
    <property type="project" value="UniProtKB-UniRule"/>
</dbReference>
<dbReference type="GO" id="GO:0044209">
    <property type="term" value="P:AMP salvage"/>
    <property type="evidence" value="ECO:0007669"/>
    <property type="project" value="UniProtKB-UniRule"/>
</dbReference>
<dbReference type="CDD" id="cd01428">
    <property type="entry name" value="ADK"/>
    <property type="match status" value="1"/>
</dbReference>
<dbReference type="FunFam" id="3.40.50.300:FF:000106">
    <property type="entry name" value="Adenylate kinase mitochondrial"/>
    <property type="match status" value="1"/>
</dbReference>
<dbReference type="Gene3D" id="3.40.50.300">
    <property type="entry name" value="P-loop containing nucleotide triphosphate hydrolases"/>
    <property type="match status" value="1"/>
</dbReference>
<dbReference type="HAMAP" id="MF_00235">
    <property type="entry name" value="Adenylate_kinase_Adk"/>
    <property type="match status" value="1"/>
</dbReference>
<dbReference type="InterPro" id="IPR006259">
    <property type="entry name" value="Adenyl_kin_sub"/>
</dbReference>
<dbReference type="InterPro" id="IPR000850">
    <property type="entry name" value="Adenylat/UMP-CMP_kin"/>
</dbReference>
<dbReference type="InterPro" id="IPR033690">
    <property type="entry name" value="Adenylat_kinase_CS"/>
</dbReference>
<dbReference type="InterPro" id="IPR007862">
    <property type="entry name" value="Adenylate_kinase_lid-dom"/>
</dbReference>
<dbReference type="InterPro" id="IPR008144">
    <property type="entry name" value="Guanylate_kin-like_dom"/>
</dbReference>
<dbReference type="InterPro" id="IPR027417">
    <property type="entry name" value="P-loop_NTPase"/>
</dbReference>
<dbReference type="NCBIfam" id="TIGR01351">
    <property type="entry name" value="adk"/>
    <property type="match status" value="1"/>
</dbReference>
<dbReference type="NCBIfam" id="NF001380">
    <property type="entry name" value="PRK00279.1-2"/>
    <property type="match status" value="1"/>
</dbReference>
<dbReference type="NCBIfam" id="NF001381">
    <property type="entry name" value="PRK00279.1-3"/>
    <property type="match status" value="1"/>
</dbReference>
<dbReference type="NCBIfam" id="NF011100">
    <property type="entry name" value="PRK14527.1"/>
    <property type="match status" value="1"/>
</dbReference>
<dbReference type="PANTHER" id="PTHR23359">
    <property type="entry name" value="NUCLEOTIDE KINASE"/>
    <property type="match status" value="1"/>
</dbReference>
<dbReference type="Pfam" id="PF00406">
    <property type="entry name" value="ADK"/>
    <property type="match status" value="1"/>
</dbReference>
<dbReference type="Pfam" id="PF05191">
    <property type="entry name" value="ADK_lid"/>
    <property type="match status" value="1"/>
</dbReference>
<dbReference type="PRINTS" id="PR00094">
    <property type="entry name" value="ADENYLTKNASE"/>
</dbReference>
<dbReference type="SUPFAM" id="SSF52540">
    <property type="entry name" value="P-loop containing nucleoside triphosphate hydrolases"/>
    <property type="match status" value="1"/>
</dbReference>
<dbReference type="PROSITE" id="PS00113">
    <property type="entry name" value="ADENYLATE_KINASE"/>
    <property type="match status" value="1"/>
</dbReference>
<name>KAD_STAAS</name>
<gene>
    <name evidence="1" type="primary">adk</name>
    <name type="ordered locus">SAS2120</name>
</gene>